<name>MIAA_GEOKA</name>
<organism>
    <name type="scientific">Geobacillus kaustophilus (strain HTA426)</name>
    <dbReference type="NCBI Taxonomy" id="235909"/>
    <lineage>
        <taxon>Bacteria</taxon>
        <taxon>Bacillati</taxon>
        <taxon>Bacillota</taxon>
        <taxon>Bacilli</taxon>
        <taxon>Bacillales</taxon>
        <taxon>Anoxybacillaceae</taxon>
        <taxon>Geobacillus</taxon>
        <taxon>Geobacillus thermoleovorans group</taxon>
    </lineage>
</organism>
<reference key="1">
    <citation type="journal article" date="2004" name="Nucleic Acids Res.">
        <title>Thermoadaptation trait revealed by the genome sequence of thermophilic Geobacillus kaustophilus.</title>
        <authorList>
            <person name="Takami H."/>
            <person name="Takaki Y."/>
            <person name="Chee G.-J."/>
            <person name="Nishi S."/>
            <person name="Shimamura S."/>
            <person name="Suzuki H."/>
            <person name="Matsui S."/>
            <person name="Uchiyama I."/>
        </authorList>
    </citation>
    <scope>NUCLEOTIDE SEQUENCE [LARGE SCALE GENOMIC DNA]</scope>
    <source>
        <strain>HTA426</strain>
    </source>
</reference>
<comment type="function">
    <text evidence="1">Catalyzes the transfer of a dimethylallyl group onto the adenine at position 37 in tRNAs that read codons beginning with uridine, leading to the formation of N6-(dimethylallyl)adenosine (i(6)A).</text>
</comment>
<comment type="catalytic activity">
    <reaction evidence="1">
        <text>adenosine(37) in tRNA + dimethylallyl diphosphate = N(6)-dimethylallyladenosine(37) in tRNA + diphosphate</text>
        <dbReference type="Rhea" id="RHEA:26482"/>
        <dbReference type="Rhea" id="RHEA-COMP:10162"/>
        <dbReference type="Rhea" id="RHEA-COMP:10375"/>
        <dbReference type="ChEBI" id="CHEBI:33019"/>
        <dbReference type="ChEBI" id="CHEBI:57623"/>
        <dbReference type="ChEBI" id="CHEBI:74411"/>
        <dbReference type="ChEBI" id="CHEBI:74415"/>
        <dbReference type="EC" id="2.5.1.75"/>
    </reaction>
</comment>
<comment type="cofactor">
    <cofactor evidence="1">
        <name>Mg(2+)</name>
        <dbReference type="ChEBI" id="CHEBI:18420"/>
    </cofactor>
</comment>
<comment type="subunit">
    <text evidence="1">Monomer.</text>
</comment>
<comment type="similarity">
    <text evidence="1">Belongs to the IPP transferase family.</text>
</comment>
<keyword id="KW-0067">ATP-binding</keyword>
<keyword id="KW-0460">Magnesium</keyword>
<keyword id="KW-0547">Nucleotide-binding</keyword>
<keyword id="KW-1185">Reference proteome</keyword>
<keyword id="KW-0808">Transferase</keyword>
<keyword id="KW-0819">tRNA processing</keyword>
<evidence type="ECO:0000255" key="1">
    <source>
        <dbReference type="HAMAP-Rule" id="MF_00185"/>
    </source>
</evidence>
<feature type="chain" id="PRO_0000163920" description="tRNA dimethylallyltransferase">
    <location>
        <begin position="1"/>
        <end position="315"/>
    </location>
</feature>
<feature type="region of interest" description="Interaction with substrate tRNA" evidence="1">
    <location>
        <begin position="35"/>
        <end position="38"/>
    </location>
</feature>
<feature type="binding site" evidence="1">
    <location>
        <begin position="10"/>
        <end position="17"/>
    </location>
    <ligand>
        <name>ATP</name>
        <dbReference type="ChEBI" id="CHEBI:30616"/>
    </ligand>
</feature>
<feature type="binding site" evidence="1">
    <location>
        <begin position="12"/>
        <end position="17"/>
    </location>
    <ligand>
        <name>substrate</name>
    </ligand>
</feature>
<feature type="site" description="Interaction with substrate tRNA" evidence="1">
    <location>
        <position position="101"/>
    </location>
</feature>
<feature type="site" description="Interaction with substrate tRNA" evidence="1">
    <location>
        <position position="124"/>
    </location>
</feature>
<accession>Q5L0D9</accession>
<dbReference type="EC" id="2.5.1.75" evidence="1"/>
<dbReference type="EMBL" id="BA000043">
    <property type="protein sequence ID" value="BAD75597.1"/>
    <property type="molecule type" value="Genomic_DNA"/>
</dbReference>
<dbReference type="RefSeq" id="WP_011230811.1">
    <property type="nucleotide sequence ID" value="NC_006510.1"/>
</dbReference>
<dbReference type="SMR" id="Q5L0D9"/>
<dbReference type="STRING" id="235909.GK1312"/>
<dbReference type="GeneID" id="32063208"/>
<dbReference type="KEGG" id="gka:GK1312"/>
<dbReference type="eggNOG" id="COG0324">
    <property type="taxonomic scope" value="Bacteria"/>
</dbReference>
<dbReference type="HOGENOM" id="CLU_032616_0_1_9"/>
<dbReference type="Proteomes" id="UP000001172">
    <property type="component" value="Chromosome"/>
</dbReference>
<dbReference type="GO" id="GO:0005524">
    <property type="term" value="F:ATP binding"/>
    <property type="evidence" value="ECO:0007669"/>
    <property type="project" value="UniProtKB-UniRule"/>
</dbReference>
<dbReference type="GO" id="GO:0052381">
    <property type="term" value="F:tRNA dimethylallyltransferase activity"/>
    <property type="evidence" value="ECO:0007669"/>
    <property type="project" value="UniProtKB-UniRule"/>
</dbReference>
<dbReference type="GO" id="GO:0006400">
    <property type="term" value="P:tRNA modification"/>
    <property type="evidence" value="ECO:0007669"/>
    <property type="project" value="TreeGrafter"/>
</dbReference>
<dbReference type="FunFam" id="1.10.20.140:FF:000001">
    <property type="entry name" value="tRNA dimethylallyltransferase"/>
    <property type="match status" value="1"/>
</dbReference>
<dbReference type="Gene3D" id="1.10.20.140">
    <property type="match status" value="1"/>
</dbReference>
<dbReference type="Gene3D" id="3.40.50.300">
    <property type="entry name" value="P-loop containing nucleotide triphosphate hydrolases"/>
    <property type="match status" value="1"/>
</dbReference>
<dbReference type="HAMAP" id="MF_00185">
    <property type="entry name" value="IPP_trans"/>
    <property type="match status" value="1"/>
</dbReference>
<dbReference type="InterPro" id="IPR039657">
    <property type="entry name" value="Dimethylallyltransferase"/>
</dbReference>
<dbReference type="InterPro" id="IPR018022">
    <property type="entry name" value="IPT"/>
</dbReference>
<dbReference type="InterPro" id="IPR027417">
    <property type="entry name" value="P-loop_NTPase"/>
</dbReference>
<dbReference type="NCBIfam" id="TIGR00174">
    <property type="entry name" value="miaA"/>
    <property type="match status" value="1"/>
</dbReference>
<dbReference type="PANTHER" id="PTHR11088">
    <property type="entry name" value="TRNA DIMETHYLALLYLTRANSFERASE"/>
    <property type="match status" value="1"/>
</dbReference>
<dbReference type="PANTHER" id="PTHR11088:SF60">
    <property type="entry name" value="TRNA DIMETHYLALLYLTRANSFERASE"/>
    <property type="match status" value="1"/>
</dbReference>
<dbReference type="Pfam" id="PF01715">
    <property type="entry name" value="IPPT"/>
    <property type="match status" value="1"/>
</dbReference>
<dbReference type="SUPFAM" id="SSF52540">
    <property type="entry name" value="P-loop containing nucleoside triphosphate hydrolases"/>
    <property type="match status" value="2"/>
</dbReference>
<sequence length="315" mass="35397">MAEKVAVIVGPTAVGKTKLGIALAKKLGGEVISGDSMQIYKGMDIGTAKVKPDEMEGIPHHLLDIKEPCEPFSVVEFQRLCRALITEISARGRLPIIVGGTGLYIQAALYDYQFSAAPSDEAYRRALKQLAAEQGAEALHRRLEAVDPISAARIHPHNIRRVIRALEVYHCTGKPFSEWQQGQSKRLLYEAAIVGLTAEREALYRRINERVDEMIAAGLIEEARALYDRGLRDCQAVQAIGYKELYDYFDGRVSLDEAIEQLKQNSRRYAKRQLTWFRNQMPVKWFDMTDAGQFAAKVEEISRYVAGKLQLEANI</sequence>
<protein>
    <recommendedName>
        <fullName evidence="1">tRNA dimethylallyltransferase</fullName>
        <ecNumber evidence="1">2.5.1.75</ecNumber>
    </recommendedName>
    <alternativeName>
        <fullName evidence="1">Dimethylallyl diphosphate:tRNA dimethylallyltransferase</fullName>
        <shortName evidence="1">DMAPP:tRNA dimethylallyltransferase</shortName>
        <shortName evidence="1">DMATase</shortName>
    </alternativeName>
    <alternativeName>
        <fullName evidence="1">Isopentenyl-diphosphate:tRNA isopentenyltransferase</fullName>
        <shortName evidence="1">IPP transferase</shortName>
        <shortName evidence="1">IPPT</shortName>
        <shortName evidence="1">IPTase</shortName>
    </alternativeName>
</protein>
<gene>
    <name evidence="1" type="primary">miaA</name>
    <name type="ordered locus">GK1312</name>
</gene>
<proteinExistence type="inferred from homology"/>